<protein>
    <recommendedName>
        <fullName>UDP-N-acetylglucosamine--peptide N-acetylglucosaminyltransferase 110 kDa subunit</fullName>
        <ecNumber evidence="4 9">2.4.1.255</ecNumber>
    </recommendedName>
    <alternativeName>
        <fullName>O-GlcNAc transferase subunit p110</fullName>
    </alternativeName>
    <alternativeName>
        <fullName>O-linked N-acetylglucosamine transferase 110 kDa subunit</fullName>
        <shortName>OGT</shortName>
    </alternativeName>
</protein>
<accession>P56558</accession>
<organism>
    <name type="scientific">Rattus norvegicus</name>
    <name type="common">Rat</name>
    <dbReference type="NCBI Taxonomy" id="10116"/>
    <lineage>
        <taxon>Eukaryota</taxon>
        <taxon>Metazoa</taxon>
        <taxon>Chordata</taxon>
        <taxon>Craniata</taxon>
        <taxon>Vertebrata</taxon>
        <taxon>Euteleostomi</taxon>
        <taxon>Mammalia</taxon>
        <taxon>Eutheria</taxon>
        <taxon>Euarchontoglires</taxon>
        <taxon>Glires</taxon>
        <taxon>Rodentia</taxon>
        <taxon>Myomorpha</taxon>
        <taxon>Muroidea</taxon>
        <taxon>Muridae</taxon>
        <taxon>Murinae</taxon>
        <taxon>Rattus</taxon>
    </lineage>
</organism>
<sequence length="1036" mass="115606">MASSVGNVADSTGLAELAHREYQAGDFEAAERHCMQLWRQEPDNTGVLLLLSSIHFQCRRLDRSAHFSTLAIKQNPLLAEAYSNLGNVYKERGQLQEAIEHYRHALRLKPDFIDGYINLAAALVAAGDMEGAVQAYVSALQYNPDLYCVRSDLGNLLKALGRLEEAKACYLKAIETQPNFAVAWSNLGCVFNAQGEIWLAIHHFEKAVTLDPNFLDAYINLGNVLKEARIFDRAVAAYLRALSLSPNHAVVHGNLACVYYEQGLIDLAIDTYRRAIELQPHFPDAYCNLANALKEKGSVAEAEDCYNTALRLCPTHADSLNNLANIKREQGNIEEAVRLYRKALEVFPEFAAAHSNLASVLQQQGKLQEALMHYKEAIRISPTFADAYSNMGNTLKEMQDVQGALQCYTRAIQINPAFADAHSNLASIHKDSGNIPEAIASYRTALKLKPDFPDAYCNLAHCLQIVCDWTDYDERMKKLVSIVAEQLEKNRLPSVHPHHSMLYPLSHGFRKAIAERHGNLCLDKINVLHKPPYEHPKDLKLSDGRLRVGYVSSDFGNHPTSHLMQSIPGMHNPDKFEVFCYALSPDDGTNFRVKVMAEANHFIDLSQIPCNGKAADRIHQDGIHILVNMNGYTKGARNELFALRPAPIQAMWLGYPGTSGALFMDYIITDQETSPAEVAEQYSEKLAYMPHTFFIGDHANMFPHLKKKAVIDFKSNGHIYDNRIVLNGIDLKAFLDSLPDVKIVKMKCPDGGDNADTTNTALNMPVIPMNTIAEAVIEMINRGQIQITINGFSISNGLATTQINNKAATGEEVPRTIIVTTRSQYGLPEDAIVYCNFNQLYKIDPSTLQMGANILKRVPNSVLWLLRFPAVGEPNIQQYAQNMGLPQNRIIFSPVAPKEEHVRRGQLADVCLDTPLCNGHTTGMDVLWAGTPMVTMPGETLASRVAASQLTCLGCLELIAKSRQEYEDIAVKLGTDLEYLKKIRGKVWKQRISSPLFNTKQYTMELERLYLQMWEHYAAGNKPDHMIKPVEVTESA</sequence>
<reference key="1">
    <citation type="journal article" date="1997" name="J. Biol. Chem.">
        <title>Dynamic glycosylation of nuclear and cytosolic proteins. Cloning and characterization of a unique O-GlcNAc transferase with multiple tetratricopeptide repeats.</title>
        <authorList>
            <person name="Kreppel L.K."/>
            <person name="Blomberg M.A."/>
            <person name="Hart G.W."/>
        </authorList>
    </citation>
    <scope>NUCLEOTIDE SEQUENCE [MRNA]</scope>
    <scope>PARTIAL PROTEIN SEQUENCE</scope>
    <scope>TISSUE SPECIFICITY</scope>
    <scope>PHOSPHORYLATION AT TYR-979</scope>
    <scope>GLYCOSYLATION</scope>
    <scope>SUBCELLULAR LOCATION</scope>
    <scope>PROBABLE PROCESSING</scope>
    <source>
        <strain>Sprague-Dawley</strain>
        <tissue>Liver</tissue>
    </source>
</reference>
<reference key="2">
    <citation type="journal article" date="1992" name="J. Biol. Chem.">
        <title>Glycosylation of nuclear and cytoplasmic proteins. Purification and characterization of a uridine diphospho-N-acetylglucosamine:polypeptide beta-N-acetylglucosaminyltransferase.</title>
        <authorList>
            <person name="Haltiwanger R.S."/>
            <person name="Blomberg M.A."/>
            <person name="Hart G.W."/>
        </authorList>
    </citation>
    <scope>FUNCTION</scope>
    <scope>ACTIVITY REGULATION</scope>
    <scope>BIOPHYSICOCHEMICAL PROPERTIES</scope>
    <scope>SUBCELLULAR LOCATION</scope>
    <source>
        <tissue>Liver</tissue>
    </source>
</reference>
<reference key="3">
    <citation type="journal article" date="1999" name="Diabetes">
        <title>Localization of the O-linked N-acetylglucosamine transferase in rat pancreas.</title>
        <authorList>
            <person name="Akimoto Y."/>
            <person name="Kreppel L.K."/>
            <person name="Hirano H."/>
            <person name="Hart G.W."/>
        </authorList>
    </citation>
    <scope>TISSUE SPECIFICITY</scope>
</reference>
<reference key="4">
    <citation type="journal article" date="1999" name="J. Biol. Chem.">
        <title>Regulation of a cytosolic and nuclear O-GlcNAc transferase. Role of the tetratricopeptide repeats.</title>
        <authorList>
            <person name="Kreppel L.K."/>
            <person name="Hart G.W."/>
        </authorList>
    </citation>
    <scope>FUNCTION</scope>
    <scope>CATALYTIC ACTIVITY</scope>
    <scope>SUBUNIT</scope>
    <scope>MUTAGENESIS OF 2-MET--ARG-274 AND 2-MET--ALA-173</scope>
</reference>
<reference key="5">
    <citation type="journal article" date="2006" name="J. Biol. Chem.">
        <title>Ataxin-10 interacts with O-linked beta-N-acetylglucosamine transferase in the brain.</title>
        <authorList>
            <person name="Maerz P."/>
            <person name="Stetefeld J."/>
            <person name="Bendfeldt K."/>
            <person name="Nitsch C."/>
            <person name="Reinstein J."/>
            <person name="Shoeman R.L."/>
            <person name="Dimitriades-Schmutz B."/>
            <person name="Schwager M."/>
            <person name="Leiser D."/>
            <person name="Ozcan S."/>
            <person name="Otten U."/>
            <person name="Ozbek S."/>
        </authorList>
    </citation>
    <scope>SUBCELLULAR LOCATION</scope>
    <scope>INTERACTION WITH ATXN10</scope>
    <scope>SUBUNIT</scope>
    <scope>TISSUE SPECIFICITY</scope>
    <scope>IDENTIFICATION BY MASS SPECTROMETRY</scope>
</reference>
<reference key="6">
    <citation type="journal article" date="2008" name="Nature">
        <title>Phosphoinositide signalling links O-GlcNAc transferase to insulin resistance.</title>
        <authorList>
            <person name="Yang X."/>
            <person name="Ongusaha P.P."/>
            <person name="Miles P.D."/>
            <person name="Havstad J.C."/>
            <person name="Zhang F."/>
            <person name="So W.V."/>
            <person name="Kudlow J.E."/>
            <person name="Michell R.H."/>
            <person name="Olefsky J.M."/>
            <person name="Field S.J."/>
            <person name="Evans R.M."/>
        </authorList>
    </citation>
    <scope>FUNCTION</scope>
    <scope>SUBCELLULAR LOCATION</scope>
    <scope>PHOSPHATIDYLINOSITOL-BINDING</scope>
    <scope>MUTAGENESIS OF 981-LYS-LYS-982; ARG-984; LYS-986; LYS-989; ARG-991 AND LYS-1000</scope>
</reference>
<reference key="7">
    <citation type="journal article" date="2014" name="Cell">
        <title>Glucose regulates mitochondrial motility via Milton modification by O-GlcNAc transferase.</title>
        <authorList>
            <person name="Pekkurnaz G."/>
            <person name="Trinidad J.C."/>
            <person name="Wang X."/>
            <person name="Kong D."/>
            <person name="Schwarz T.L."/>
        </authorList>
    </citation>
    <scope>FUNCTION</scope>
    <scope>CATALYTIC ACTIVITY</scope>
    <scope>ACTIVE SITE</scope>
    <scope>PATHWAY</scope>
    <scope>INTERACTION WITH KIF5B; RHOT1; RHOT2 AND TRAK1</scope>
    <scope>SUBCELLULAR LOCATION</scope>
    <scope>MUTAGENESIS OF 2-MET--MET-129; 2-MET--HIS-248 AND HIS-498</scope>
</reference>
<proteinExistence type="evidence at protein level"/>
<gene>
    <name type="primary">Ogt</name>
</gene>
<evidence type="ECO:0000250" key="1">
    <source>
        <dbReference type="UniProtKB" id="O15294"/>
    </source>
</evidence>
<evidence type="ECO:0000250" key="2">
    <source>
        <dbReference type="UniProtKB" id="Q8CGY8"/>
    </source>
</evidence>
<evidence type="ECO:0000255" key="3"/>
<evidence type="ECO:0000269" key="4">
    <source>
    </source>
</evidence>
<evidence type="ECO:0000269" key="5">
    <source>
    </source>
</evidence>
<evidence type="ECO:0000269" key="6">
    <source>
    </source>
</evidence>
<evidence type="ECO:0000269" key="7">
    <source>
    </source>
</evidence>
<evidence type="ECO:0000269" key="8">
    <source>
    </source>
</evidence>
<evidence type="ECO:0000269" key="9">
    <source>
    </source>
</evidence>
<evidence type="ECO:0000269" key="10">
    <source>
    </source>
</evidence>
<evidence type="ECO:0000305" key="11"/>
<evidence type="ECO:0000305" key="12">
    <source>
    </source>
</evidence>
<feature type="initiator methionine" description="Removed" evidence="1">
    <location>
        <position position="1"/>
    </location>
</feature>
<feature type="chain" id="PRO_0000191774" description="UDP-N-acetylglucosamine--peptide N-acetylglucosaminyltransferase 110 kDa subunit">
    <location>
        <begin position="2"/>
        <end position="1036"/>
    </location>
</feature>
<feature type="repeat" description="TPR 1">
    <location>
        <begin position="11"/>
        <end position="44"/>
    </location>
</feature>
<feature type="repeat" description="TPR 2">
    <location>
        <begin position="79"/>
        <end position="112"/>
    </location>
</feature>
<feature type="repeat" description="TPR 3">
    <location>
        <begin position="113"/>
        <end position="146"/>
    </location>
</feature>
<feature type="repeat" description="TPR 4">
    <location>
        <begin position="147"/>
        <end position="180"/>
    </location>
</feature>
<feature type="repeat" description="TPR 5">
    <location>
        <begin position="181"/>
        <end position="214"/>
    </location>
</feature>
<feature type="repeat" description="TPR 6">
    <location>
        <begin position="215"/>
        <end position="248"/>
    </location>
</feature>
<feature type="repeat" description="TPR 7">
    <location>
        <begin position="249"/>
        <end position="282"/>
    </location>
</feature>
<feature type="repeat" description="TPR 8">
    <location>
        <begin position="283"/>
        <end position="316"/>
    </location>
</feature>
<feature type="repeat" description="TPR 9">
    <location>
        <begin position="317"/>
        <end position="350"/>
    </location>
</feature>
<feature type="repeat" description="TPR 10">
    <location>
        <begin position="351"/>
        <end position="384"/>
    </location>
</feature>
<feature type="repeat" description="TPR 11">
    <location>
        <begin position="385"/>
        <end position="418"/>
    </location>
</feature>
<feature type="repeat" description="TPR 12">
    <location>
        <begin position="419"/>
        <end position="452"/>
    </location>
</feature>
<feature type="repeat" description="TPR 13; truncated">
    <location>
        <begin position="453"/>
        <end position="463"/>
    </location>
</feature>
<feature type="region of interest" description="Required for phosphatidylinositol 3,4,5-triphosphate binding" evidence="8">
    <location>
        <begin position="981"/>
        <end position="1000"/>
    </location>
</feature>
<feature type="short sequence motif" description="DFP motif" evidence="1">
    <location>
        <begin position="454"/>
        <end position="456"/>
    </location>
</feature>
<feature type="short sequence motif" description="Nuclear localization signal" evidence="3">
    <location>
        <begin position="478"/>
        <end position="493"/>
    </location>
</feature>
<feature type="active site" description="Proton acceptor" evidence="9">
    <location>
        <position position="498"/>
    </location>
</feature>
<feature type="binding site" evidence="1">
    <location>
        <position position="839"/>
    </location>
    <ligand>
        <name>UDP</name>
        <dbReference type="ChEBI" id="CHEBI:58223"/>
    </ligand>
</feature>
<feature type="binding site" evidence="1">
    <location>
        <position position="842"/>
    </location>
    <ligand>
        <name>UDP</name>
        <dbReference type="ChEBI" id="CHEBI:58223"/>
    </ligand>
</feature>
<feature type="binding site" evidence="1">
    <location>
        <begin position="896"/>
        <end position="898"/>
    </location>
    <ligand>
        <name>UDP</name>
        <dbReference type="ChEBI" id="CHEBI:58223"/>
    </ligand>
</feature>
<feature type="binding site" evidence="1">
    <location>
        <begin position="901"/>
        <end position="904"/>
    </location>
    <ligand>
        <name>UDP</name>
        <dbReference type="ChEBI" id="CHEBI:58223"/>
    </ligand>
</feature>
<feature type="binding site" evidence="1">
    <location>
        <begin position="920"/>
        <end position="922"/>
    </location>
    <ligand>
        <name>UDP</name>
        <dbReference type="ChEBI" id="CHEBI:58223"/>
    </ligand>
</feature>
<feature type="binding site" evidence="1">
    <location>
        <position position="925"/>
    </location>
    <ligand>
        <name>UDP</name>
        <dbReference type="ChEBI" id="CHEBI:58223"/>
    </ligand>
</feature>
<feature type="modified residue" description="N-acetylalanine" evidence="1">
    <location>
        <position position="2"/>
    </location>
</feature>
<feature type="modified residue" description="Phosphoserine; by GSK3-beta; alternate" evidence="2">
    <location>
        <position position="3"/>
    </location>
</feature>
<feature type="modified residue" description="Phosphoserine; by GSK3-beta; alternate" evidence="2">
    <location>
        <position position="4"/>
    </location>
</feature>
<feature type="modified residue" description="Phosphothreonine" evidence="1">
    <location>
        <position position="444"/>
    </location>
</feature>
<feature type="modified residue" description="Phosphotyrosine" evidence="12">
    <location>
        <position position="979"/>
    </location>
</feature>
<feature type="glycosylation site" description="O-linked (GlcNAc) serine; alternate" evidence="2">
    <location>
        <position position="3"/>
    </location>
</feature>
<feature type="glycosylation site" description="O-linked (GlcNAc) serine; alternate" evidence="2">
    <location>
        <position position="4"/>
    </location>
</feature>
<feature type="glycosylation site" description="O-linked (GlcNAc) serine; by autocatalysis" evidence="1">
    <location>
        <position position="389"/>
    </location>
</feature>
<feature type="mutagenesis site" description="Wild-type O-GlcNAc transferase activity, does not form trimers." evidence="4">
    <location>
        <begin position="2"/>
        <end position="274"/>
    </location>
</feature>
<feature type="mutagenesis site" description="Decreased TRAK1 O-glycosylation by this protein." evidence="9">
    <location>
        <begin position="2"/>
        <end position="248"/>
    </location>
</feature>
<feature type="mutagenesis site" description="Wild-type O-GlcNAc transferase activity, forms trimers." evidence="4">
    <location>
        <begin position="2"/>
        <end position="173"/>
    </location>
</feature>
<feature type="mutagenesis site" description="Decreased ability to reduce neuronal mitochondrial motility in both anterograde and retrograde directions." evidence="9">
    <location>
        <begin position="2"/>
        <end position="129"/>
    </location>
</feature>
<feature type="mutagenesis site" description="Loss of glycosylation activity. Loss of ability to reduce mitochondrial motility." evidence="9">
    <original>H</original>
    <variation>N</variation>
    <location>
        <position position="498"/>
    </location>
</feature>
<feature type="mutagenesis site" description="Abolishes phosphatidylinisitol binding, no translocation to the cell membrane, and no effect on phosphorylation of AKT1 nor IRS1." evidence="8">
    <original>KK</original>
    <variation>AA</variation>
    <location>
        <begin position="981"/>
        <end position="982"/>
    </location>
</feature>
<feature type="mutagenesis site" description="No effect on phosphatidylinisitol binding." evidence="8">
    <original>R</original>
    <variation>A</variation>
    <location>
        <position position="984"/>
    </location>
</feature>
<feature type="mutagenesis site" description="Reduced phosphatidylinisitol binding." evidence="8">
    <original>K</original>
    <variation>A</variation>
    <location>
        <position position="986"/>
    </location>
</feature>
<feature type="mutagenesis site" description="Reduced phosphatidylinisitol binding." evidence="8">
    <original>K</original>
    <variation>A</variation>
    <location>
        <position position="989"/>
    </location>
</feature>
<feature type="mutagenesis site" description="No effect on phosphatidylinisitol binding." evidence="8">
    <original>R</original>
    <variation>A</variation>
    <location>
        <position position="991"/>
    </location>
</feature>
<feature type="mutagenesis site" description="No effect on phosphatidylinisitol binding." evidence="8">
    <original>K</original>
    <variation>A</variation>
    <location>
        <position position="1000"/>
    </location>
</feature>
<name>OGT1_RAT</name>
<dbReference type="EC" id="2.4.1.255" evidence="4 9"/>
<dbReference type="EMBL" id="U76557">
    <property type="protein sequence ID" value="AAC53121.1"/>
    <property type="molecule type" value="mRNA"/>
</dbReference>
<dbReference type="PIR" id="T31673">
    <property type="entry name" value="T31673"/>
</dbReference>
<dbReference type="RefSeq" id="NP_058803.2">
    <property type="nucleotide sequence ID" value="NM_017107.2"/>
</dbReference>
<dbReference type="SMR" id="P56558"/>
<dbReference type="BioGRID" id="247798">
    <property type="interactions" value="6"/>
</dbReference>
<dbReference type="CORUM" id="P56558"/>
<dbReference type="FunCoup" id="P56558">
    <property type="interactions" value="3480"/>
</dbReference>
<dbReference type="IntAct" id="P56558">
    <property type="interactions" value="5"/>
</dbReference>
<dbReference type="MINT" id="P56558"/>
<dbReference type="STRING" id="10116.ENSRNOP00000072791"/>
<dbReference type="CAZy" id="GT41">
    <property type="family name" value="Glycosyltransferase Family 41"/>
</dbReference>
<dbReference type="GlyCosmos" id="P56558">
    <property type="glycosylation" value="2 sites, No reported glycans"/>
</dbReference>
<dbReference type="GlyGen" id="P56558">
    <property type="glycosylation" value="4 sites, 1 O-linked glycan (1 site)"/>
</dbReference>
<dbReference type="iPTMnet" id="P56558"/>
<dbReference type="PhosphoSitePlus" id="P56558"/>
<dbReference type="jPOST" id="P56558"/>
<dbReference type="PaxDb" id="10116-ENSRNOP00000004692"/>
<dbReference type="GeneID" id="26295"/>
<dbReference type="KEGG" id="rno:26295"/>
<dbReference type="UCSC" id="RGD:62060">
    <property type="organism name" value="rat"/>
</dbReference>
<dbReference type="AGR" id="RGD:62060"/>
<dbReference type="CTD" id="8473"/>
<dbReference type="RGD" id="62060">
    <property type="gene designation" value="Ogt"/>
</dbReference>
<dbReference type="eggNOG" id="KOG1124">
    <property type="taxonomic scope" value="Eukaryota"/>
</dbReference>
<dbReference type="eggNOG" id="KOG4626">
    <property type="taxonomic scope" value="Eukaryota"/>
</dbReference>
<dbReference type="InParanoid" id="P56558"/>
<dbReference type="OrthoDB" id="9991317at2759"/>
<dbReference type="PhylomeDB" id="P56558"/>
<dbReference type="BRENDA" id="2.4.1.255">
    <property type="organism ID" value="5301"/>
</dbReference>
<dbReference type="Reactome" id="R-RNO-3214847">
    <property type="pathway name" value="HATs acetylate histones"/>
</dbReference>
<dbReference type="Reactome" id="R-RNO-5675482">
    <property type="pathway name" value="Regulation of necroptotic cell death"/>
</dbReference>
<dbReference type="Reactome" id="R-RNO-5689603">
    <property type="pathway name" value="UCH proteinases"/>
</dbReference>
<dbReference type="Reactome" id="R-RNO-9772755">
    <property type="pathway name" value="Formation of WDR5-containing histone-modifying complexes"/>
</dbReference>
<dbReference type="UniPathway" id="UPA00378"/>
<dbReference type="PRO" id="PR:P56558"/>
<dbReference type="Proteomes" id="UP000002494">
    <property type="component" value="Unplaced"/>
</dbReference>
<dbReference type="GO" id="GO:0042995">
    <property type="term" value="C:cell projection"/>
    <property type="evidence" value="ECO:0007669"/>
    <property type="project" value="UniProtKB-SubCell"/>
</dbReference>
<dbReference type="GO" id="GO:0150048">
    <property type="term" value="C:cerebellar granule cell to Purkinje cell synapse"/>
    <property type="evidence" value="ECO:0000314"/>
    <property type="project" value="SynGO"/>
</dbReference>
<dbReference type="GO" id="GO:0005829">
    <property type="term" value="C:cytosol"/>
    <property type="evidence" value="ECO:0000266"/>
    <property type="project" value="RGD"/>
</dbReference>
<dbReference type="GO" id="GO:0000791">
    <property type="term" value="C:euchromatin"/>
    <property type="evidence" value="ECO:0000314"/>
    <property type="project" value="RGD"/>
</dbReference>
<dbReference type="GO" id="GO:0098982">
    <property type="term" value="C:GABA-ergic synapse"/>
    <property type="evidence" value="ECO:0000314"/>
    <property type="project" value="SynGO"/>
</dbReference>
<dbReference type="GO" id="GO:0098978">
    <property type="term" value="C:glutamatergic synapse"/>
    <property type="evidence" value="ECO:0000314"/>
    <property type="project" value="SynGO"/>
</dbReference>
<dbReference type="GO" id="GO:0000123">
    <property type="term" value="C:histone acetyltransferase complex"/>
    <property type="evidence" value="ECO:0000250"/>
    <property type="project" value="UniProtKB"/>
</dbReference>
<dbReference type="GO" id="GO:0031966">
    <property type="term" value="C:mitochondrial membrane"/>
    <property type="evidence" value="ECO:0007669"/>
    <property type="project" value="UniProtKB-SubCell"/>
</dbReference>
<dbReference type="GO" id="GO:0043025">
    <property type="term" value="C:neuronal cell body"/>
    <property type="evidence" value="ECO:0000314"/>
    <property type="project" value="RGD"/>
</dbReference>
<dbReference type="GO" id="GO:0044545">
    <property type="term" value="C:NSL complex"/>
    <property type="evidence" value="ECO:0000266"/>
    <property type="project" value="RGD"/>
</dbReference>
<dbReference type="GO" id="GO:0005634">
    <property type="term" value="C:nucleus"/>
    <property type="evidence" value="ECO:0000266"/>
    <property type="project" value="RGD"/>
</dbReference>
<dbReference type="GO" id="GO:0005886">
    <property type="term" value="C:plasma membrane"/>
    <property type="evidence" value="ECO:0000250"/>
    <property type="project" value="UniProtKB"/>
</dbReference>
<dbReference type="GO" id="GO:0099524">
    <property type="term" value="C:postsynaptic cytosol"/>
    <property type="evidence" value="ECO:0000314"/>
    <property type="project" value="SynGO"/>
</dbReference>
<dbReference type="GO" id="GO:0099523">
    <property type="term" value="C:presynaptic cytosol"/>
    <property type="evidence" value="ECO:0000314"/>
    <property type="project" value="SynGO"/>
</dbReference>
<dbReference type="GO" id="GO:0017122">
    <property type="term" value="C:protein N-acetylglucosaminyltransferase complex"/>
    <property type="evidence" value="ECO:0000314"/>
    <property type="project" value="UniProtKB"/>
</dbReference>
<dbReference type="GO" id="GO:0032991">
    <property type="term" value="C:protein-containing complex"/>
    <property type="evidence" value="ECO:0000266"/>
    <property type="project" value="RGD"/>
</dbReference>
<dbReference type="GO" id="GO:0045202">
    <property type="term" value="C:synapse"/>
    <property type="evidence" value="ECO:0000266"/>
    <property type="project" value="RGD"/>
</dbReference>
<dbReference type="GO" id="GO:0042588">
    <property type="term" value="C:zymogen granule"/>
    <property type="evidence" value="ECO:0000314"/>
    <property type="project" value="RGD"/>
</dbReference>
<dbReference type="GO" id="GO:0031490">
    <property type="term" value="F:chromatin DNA binding"/>
    <property type="evidence" value="ECO:0000266"/>
    <property type="project" value="RGD"/>
</dbReference>
<dbReference type="GO" id="GO:0042802">
    <property type="term" value="F:identical protein binding"/>
    <property type="evidence" value="ECO:0000353"/>
    <property type="project" value="RGD"/>
</dbReference>
<dbReference type="GO" id="GO:0042277">
    <property type="term" value="F:peptide binding"/>
    <property type="evidence" value="ECO:0000314"/>
    <property type="project" value="RGD"/>
</dbReference>
<dbReference type="GO" id="GO:0005547">
    <property type="term" value="F:phosphatidylinositol-3,4,5-trisphosphate binding"/>
    <property type="evidence" value="ECO:0000250"/>
    <property type="project" value="UniProtKB"/>
</dbReference>
<dbReference type="GO" id="GO:0019904">
    <property type="term" value="F:protein domain specific binding"/>
    <property type="evidence" value="ECO:0000353"/>
    <property type="project" value="RGD"/>
</dbReference>
<dbReference type="GO" id="GO:0097363">
    <property type="term" value="F:protein O-acetylglucosaminyltransferase activity"/>
    <property type="evidence" value="ECO:0000314"/>
    <property type="project" value="RGD"/>
</dbReference>
<dbReference type="GO" id="GO:0044877">
    <property type="term" value="F:protein-containing complex binding"/>
    <property type="evidence" value="ECO:0000314"/>
    <property type="project" value="RGD"/>
</dbReference>
<dbReference type="GO" id="GO:0006915">
    <property type="term" value="P:apoptotic process"/>
    <property type="evidence" value="ECO:0000250"/>
    <property type="project" value="UniProtKB"/>
</dbReference>
<dbReference type="GO" id="GO:0071333">
    <property type="term" value="P:cellular response to glucose stimulus"/>
    <property type="evidence" value="ECO:0000315"/>
    <property type="project" value="RGD"/>
</dbReference>
<dbReference type="GO" id="GO:0032869">
    <property type="term" value="P:cellular response to insulin stimulus"/>
    <property type="evidence" value="ECO:0000270"/>
    <property type="project" value="RGD"/>
</dbReference>
<dbReference type="GO" id="GO:0071222">
    <property type="term" value="P:cellular response to lipopolysaccharide"/>
    <property type="evidence" value="ECO:0000315"/>
    <property type="project" value="RGD"/>
</dbReference>
<dbReference type="GO" id="GO:0097237">
    <property type="term" value="P:cellular response to toxic substance"/>
    <property type="evidence" value="ECO:0000270"/>
    <property type="project" value="RGD"/>
</dbReference>
<dbReference type="GO" id="GO:0006325">
    <property type="term" value="P:chromatin organization"/>
    <property type="evidence" value="ECO:0007669"/>
    <property type="project" value="UniProtKB-KW"/>
</dbReference>
<dbReference type="GO" id="GO:0032922">
    <property type="term" value="P:circadian regulation of gene expression"/>
    <property type="evidence" value="ECO:0000250"/>
    <property type="project" value="UniProtKB"/>
</dbReference>
<dbReference type="GO" id="GO:0030900">
    <property type="term" value="P:forebrain development"/>
    <property type="evidence" value="ECO:0000270"/>
    <property type="project" value="RGD"/>
</dbReference>
<dbReference type="GO" id="GO:0006041">
    <property type="term" value="P:glucosamine metabolic process"/>
    <property type="evidence" value="ECO:0000314"/>
    <property type="project" value="RGD"/>
</dbReference>
<dbReference type="GO" id="GO:0030097">
    <property type="term" value="P:hemopoiesis"/>
    <property type="evidence" value="ECO:0000266"/>
    <property type="project" value="RGD"/>
</dbReference>
<dbReference type="GO" id="GO:0048312">
    <property type="term" value="P:intracellular distribution of mitochondria"/>
    <property type="evidence" value="ECO:0000315"/>
    <property type="project" value="RGD"/>
</dbReference>
<dbReference type="GO" id="GO:0000423">
    <property type="term" value="P:mitophagy"/>
    <property type="evidence" value="ECO:0000266"/>
    <property type="project" value="RGD"/>
</dbReference>
<dbReference type="GO" id="GO:1900038">
    <property type="term" value="P:negative regulation of cellular response to hypoxia"/>
    <property type="evidence" value="ECO:0000315"/>
    <property type="project" value="RGD"/>
</dbReference>
<dbReference type="GO" id="GO:0160076">
    <property type="term" value="P:negative regulation of non-canonical inflammasome complex assembly"/>
    <property type="evidence" value="ECO:0000250"/>
    <property type="project" value="UniProtKB"/>
</dbReference>
<dbReference type="GO" id="GO:0032435">
    <property type="term" value="P:negative regulation of proteasomal ubiquitin-dependent protein catabolic process"/>
    <property type="evidence" value="ECO:0000266"/>
    <property type="project" value="RGD"/>
</dbReference>
<dbReference type="GO" id="GO:0090315">
    <property type="term" value="P:negative regulation of protein targeting to membrane"/>
    <property type="evidence" value="ECO:0000315"/>
    <property type="project" value="RGD"/>
</dbReference>
<dbReference type="GO" id="GO:0031397">
    <property type="term" value="P:negative regulation of protein ubiquitination"/>
    <property type="evidence" value="ECO:0000250"/>
    <property type="project" value="UniProtKB"/>
</dbReference>
<dbReference type="GO" id="GO:0045793">
    <property type="term" value="P:positive regulation of cell size"/>
    <property type="evidence" value="ECO:0000315"/>
    <property type="project" value="RGD"/>
</dbReference>
<dbReference type="GO" id="GO:0120162">
    <property type="term" value="P:positive regulation of cold-induced thermogenesis"/>
    <property type="evidence" value="ECO:0000250"/>
    <property type="project" value="YuBioLab"/>
</dbReference>
<dbReference type="GO" id="GO:0010628">
    <property type="term" value="P:positive regulation of gene expression"/>
    <property type="evidence" value="ECO:0000315"/>
    <property type="project" value="RGD"/>
</dbReference>
<dbReference type="GO" id="GO:0046889">
    <property type="term" value="P:positive regulation of lipid biosynthetic process"/>
    <property type="evidence" value="ECO:0000266"/>
    <property type="project" value="RGD"/>
</dbReference>
<dbReference type="GO" id="GO:1900182">
    <property type="term" value="P:positive regulation of protein localization to nucleus"/>
    <property type="evidence" value="ECO:0000315"/>
    <property type="project" value="RGD"/>
</dbReference>
<dbReference type="GO" id="GO:0045862">
    <property type="term" value="P:positive regulation of proteolysis"/>
    <property type="evidence" value="ECO:0000250"/>
    <property type="project" value="UniProtKB"/>
</dbReference>
<dbReference type="GO" id="GO:1903428">
    <property type="term" value="P:positive regulation of reactive oxygen species biosynthetic process"/>
    <property type="evidence" value="ECO:0000315"/>
    <property type="project" value="RGD"/>
</dbReference>
<dbReference type="GO" id="GO:1904263">
    <property type="term" value="P:positive regulation of TORC1 signaling"/>
    <property type="evidence" value="ECO:0000250"/>
    <property type="project" value="UniProtKB"/>
</dbReference>
<dbReference type="GO" id="GO:0045944">
    <property type="term" value="P:positive regulation of transcription by RNA polymerase II"/>
    <property type="evidence" value="ECO:0000250"/>
    <property type="project" value="UniProtKB"/>
</dbReference>
<dbReference type="GO" id="GO:0000432">
    <property type="term" value="P:positive regulation of transcription from RNA polymerase II promoter by glucose"/>
    <property type="evidence" value="ECO:0000266"/>
    <property type="project" value="RGD"/>
</dbReference>
<dbReference type="GO" id="GO:0045727">
    <property type="term" value="P:positive regulation of translation"/>
    <property type="evidence" value="ECO:0000266"/>
    <property type="project" value="RGD"/>
</dbReference>
<dbReference type="GO" id="GO:0006493">
    <property type="term" value="P:protein O-linked glycosylation"/>
    <property type="evidence" value="ECO:0000314"/>
    <property type="project" value="RGD"/>
</dbReference>
<dbReference type="GO" id="GO:0016485">
    <property type="term" value="P:protein processing"/>
    <property type="evidence" value="ECO:0000250"/>
    <property type="project" value="UniProtKB"/>
</dbReference>
<dbReference type="GO" id="GO:0006111">
    <property type="term" value="P:regulation of gluconeogenesis"/>
    <property type="evidence" value="ECO:0000250"/>
    <property type="project" value="UniProtKB"/>
</dbReference>
<dbReference type="GO" id="GO:0006110">
    <property type="term" value="P:regulation of glycolytic process"/>
    <property type="evidence" value="ECO:0000250"/>
    <property type="project" value="UniProtKB"/>
</dbReference>
<dbReference type="GO" id="GO:0046626">
    <property type="term" value="P:regulation of insulin receptor signaling pathway"/>
    <property type="evidence" value="ECO:0000266"/>
    <property type="project" value="RGD"/>
</dbReference>
<dbReference type="GO" id="GO:0098696">
    <property type="term" value="P:regulation of neurotransmitter receptor localization to postsynaptic specialization membrane"/>
    <property type="evidence" value="ECO:0000266"/>
    <property type="project" value="RGD"/>
</dbReference>
<dbReference type="GO" id="GO:0035020">
    <property type="term" value="P:regulation of Rac protein signal transduction"/>
    <property type="evidence" value="ECO:0000266"/>
    <property type="project" value="RGD"/>
</dbReference>
<dbReference type="GO" id="GO:0051963">
    <property type="term" value="P:regulation of synapse assembly"/>
    <property type="evidence" value="ECO:0000266"/>
    <property type="project" value="RGD"/>
</dbReference>
<dbReference type="GO" id="GO:0006357">
    <property type="term" value="P:regulation of transcription by RNA polymerase II"/>
    <property type="evidence" value="ECO:0000266"/>
    <property type="project" value="RGD"/>
</dbReference>
<dbReference type="GO" id="GO:0032868">
    <property type="term" value="P:response to insulin"/>
    <property type="evidence" value="ECO:0000266"/>
    <property type="project" value="RGD"/>
</dbReference>
<dbReference type="FunFam" id="1.25.40.10:FF:000013">
    <property type="entry name" value="UDP-N-acetylglucosamine--peptide N-acetylglucosaminyltransferase 110 kDa subunit"/>
    <property type="match status" value="1"/>
</dbReference>
<dbReference type="FunFam" id="1.25.40.10:FF:000019">
    <property type="entry name" value="UDP-N-acetylglucosamine--peptide N-acetylglucosaminyltransferase 110 kDa subunit"/>
    <property type="match status" value="1"/>
</dbReference>
<dbReference type="FunFam" id="3.30.720.150:FF:000001">
    <property type="entry name" value="UDP-N-acetylglucosamine--peptide N-acetylglucosaminyltransferase 110 kDa subunit"/>
    <property type="match status" value="1"/>
</dbReference>
<dbReference type="FunFam" id="3.40.50.11380:FF:000001">
    <property type="entry name" value="UDP-N-acetylglucosamine--peptide N-acetylglucosaminyltransferase 110 kDa subunit"/>
    <property type="match status" value="1"/>
</dbReference>
<dbReference type="FunFam" id="3.40.50.2000:FF:000012">
    <property type="entry name" value="UDP-N-acetylglucosamine--peptide N-acetylglucosaminyltransferase 110 kDa subunit"/>
    <property type="match status" value="1"/>
</dbReference>
<dbReference type="Gene3D" id="3.30.720.150">
    <property type="match status" value="1"/>
</dbReference>
<dbReference type="Gene3D" id="3.40.50.11380">
    <property type="match status" value="1"/>
</dbReference>
<dbReference type="Gene3D" id="3.40.50.2000">
    <property type="entry name" value="Glycogen Phosphorylase B"/>
    <property type="match status" value="1"/>
</dbReference>
<dbReference type="Gene3D" id="1.25.40.10">
    <property type="entry name" value="Tetratricopeptide repeat domain"/>
    <property type="match status" value="2"/>
</dbReference>
<dbReference type="InterPro" id="IPR037919">
    <property type="entry name" value="OGT"/>
</dbReference>
<dbReference type="InterPro" id="IPR029489">
    <property type="entry name" value="OGT/SEC/SPY_C"/>
</dbReference>
<dbReference type="InterPro" id="IPR011990">
    <property type="entry name" value="TPR-like_helical_dom_sf"/>
</dbReference>
<dbReference type="InterPro" id="IPR019734">
    <property type="entry name" value="TPR_rpt"/>
</dbReference>
<dbReference type="PANTHER" id="PTHR44366">
    <property type="entry name" value="UDP-N-ACETYLGLUCOSAMINE--PEPTIDE N-ACETYLGLUCOSAMINYLTRANSFERASE 110 KDA SUBUNIT"/>
    <property type="match status" value="1"/>
</dbReference>
<dbReference type="PANTHER" id="PTHR44366:SF1">
    <property type="entry name" value="UDP-N-ACETYLGLUCOSAMINE--PEPTIDE N-ACETYLGLUCOSAMINYLTRANSFERASE 110 KDA SUBUNIT"/>
    <property type="match status" value="1"/>
</dbReference>
<dbReference type="Pfam" id="PF13844">
    <property type="entry name" value="Glyco_transf_41"/>
    <property type="match status" value="1"/>
</dbReference>
<dbReference type="Pfam" id="PF00515">
    <property type="entry name" value="TPR_1"/>
    <property type="match status" value="2"/>
</dbReference>
<dbReference type="Pfam" id="PF13414">
    <property type="entry name" value="TPR_11"/>
    <property type="match status" value="3"/>
</dbReference>
<dbReference type="Pfam" id="PF13424">
    <property type="entry name" value="TPR_12"/>
    <property type="match status" value="1"/>
</dbReference>
<dbReference type="Pfam" id="PF13181">
    <property type="entry name" value="TPR_8"/>
    <property type="match status" value="2"/>
</dbReference>
<dbReference type="SMART" id="SM00028">
    <property type="entry name" value="TPR"/>
    <property type="match status" value="12"/>
</dbReference>
<dbReference type="SUPFAM" id="SSF48452">
    <property type="entry name" value="TPR-like"/>
    <property type="match status" value="3"/>
</dbReference>
<dbReference type="PROSITE" id="PS50005">
    <property type="entry name" value="TPR"/>
    <property type="match status" value="12"/>
</dbReference>
<dbReference type="PROSITE" id="PS50293">
    <property type="entry name" value="TPR_REGION"/>
    <property type="match status" value="1"/>
</dbReference>
<keyword id="KW-0007">Acetylation</keyword>
<keyword id="KW-0090">Biological rhythms</keyword>
<keyword id="KW-1003">Cell membrane</keyword>
<keyword id="KW-0966">Cell projection</keyword>
<keyword id="KW-0156">Chromatin regulator</keyword>
<keyword id="KW-0963">Cytoplasm</keyword>
<keyword id="KW-0903">Direct protein sequencing</keyword>
<keyword id="KW-0325">Glycoprotein</keyword>
<keyword id="KW-0328">Glycosyltransferase</keyword>
<keyword id="KW-0446">Lipid-binding</keyword>
<keyword id="KW-0472">Membrane</keyword>
<keyword id="KW-0496">Mitochondrion</keyword>
<keyword id="KW-0539">Nucleus</keyword>
<keyword id="KW-0597">Phosphoprotein</keyword>
<keyword id="KW-1185">Reference proteome</keyword>
<keyword id="KW-0677">Repeat</keyword>
<keyword id="KW-0802">TPR repeat</keyword>
<keyword id="KW-0808">Transferase</keyword>
<keyword id="KW-0832">Ubl conjugation</keyword>
<comment type="function">
    <text evidence="1 2 4 6 8 9">Catalyzes the transfer of a single N-acetylglucosamine from UDP-GlcNAc to a serine or threonine residue in cytoplasmic and nuclear proteins resulting in their modification with a beta-linked N-acetylglucosamine (O-GlcNAc) (PubMed:10542233, PubMed:24995978). Glycosylates a large and diverse number of proteins including histone H2B, AKT1, AMPK, ATG4B, CAPRIN1, EZH2, FNIP1, GSDMD, KRT7, LMNA, LMNB1, LMNB2, RPTOR, HOXA1, PFKL, KMT2E/MLL5, MAPT/TAU, TET2, RBL2, RET, NOD2 and HCFC1 (PubMed:10542233). Can regulate their cellular processes via cross-talk between glycosylation and phosphorylation or by affecting proteolytic processing (By similarity). Involved in insulin resistance in muscle and adipocyte cells via glycosylating insulin signaling components and inhibiting the 'Thr-308' phosphorylation of AKT1, enhancing IRS1 phosphorylation and attenuating insulin signaling (PubMed:18288188). Involved in glycolysis regulation by mediating glycosylation of 6-phosphofructokinase PFKL, inhibiting its activity (By similarity). Plays a key role in chromatin structure by mediating O-GlcNAcylation of 'Ser-112' of histone H2B: recruited to CpG-rich transcription start sites of active genes via its interaction with TET proteins (TET1, TET2 or TET3) (By similarity). As part of the NSL complex indirectly involved in acetylation of nucleosomal histone H4 on several lysine residues (By similarity). O-GlcNAcylation of 'Ser-75' of EZH2 increases its stability, and facilitating the formation of H3K27me3 by the PRC2/EED-EZH2 complex (By similarity). Stabilizes KMT2E/MLL5 by mediating its glycosylation, thereby preventing KMT2E/MLL5 ubiquitination (By similarity). Regulates circadian oscillation of the clock genes and glucose homeostasis in the liver (By similarity). Stabilizes clock proteins BMAL1 and CLOCK through O-glycosylation, which prevents their ubiquitination and subsequent degradation (By similarity). Promotes the CLOCK-BMAL1-mediated transcription of genes in the negative loop of the circadian clock such as PER1/2 and CRY1/2 (By similarity). O-glycosylates HCFC1 and regulates its proteolytic processing and transcriptional activity (By similarity). Component of a THAP1/THAP3-HCFC1-OGT complex that is required for the regulation of the transcriptional activity of RRM1 (By similarity). Regulates mitochondrial motility in neurons by mediating glycosylation of TRAK1 (PubMed:24995978). Promotes autophagy by mediating O-glycosylation of ATG4B (By similarity). Acts as a regulator of mTORC1 signaling by mediating O-glycosylation of RPTOR and FNIP1: O-GlcNAcylation of RPTOR in response to glucose sufficiency promotes activation of the mTORC1 complex (By similarity).</text>
</comment>
<comment type="catalytic activity">
    <reaction evidence="4 9">
        <text>L-seryl-[protein] + UDP-N-acetyl-alpha-D-glucosamine = 3-O-(N-acetyl-beta-D-glucosaminyl)-L-seryl-[protein] + UDP + H(+)</text>
        <dbReference type="Rhea" id="RHEA:48904"/>
        <dbReference type="Rhea" id="RHEA-COMP:9863"/>
        <dbReference type="Rhea" id="RHEA-COMP:12251"/>
        <dbReference type="ChEBI" id="CHEBI:15378"/>
        <dbReference type="ChEBI" id="CHEBI:29999"/>
        <dbReference type="ChEBI" id="CHEBI:57705"/>
        <dbReference type="ChEBI" id="CHEBI:58223"/>
        <dbReference type="ChEBI" id="CHEBI:90838"/>
        <dbReference type="EC" id="2.4.1.255"/>
    </reaction>
</comment>
<comment type="catalytic activity">
    <reaction evidence="4 9">
        <text>L-threonyl-[protein] + UDP-N-acetyl-alpha-D-glucosamine = 3-O-(N-acetyl-beta-D-glucosaminyl)-L-threonyl-[protein] + UDP + H(+)</text>
        <dbReference type="Rhea" id="RHEA:48908"/>
        <dbReference type="Rhea" id="RHEA-COMP:11060"/>
        <dbReference type="Rhea" id="RHEA-COMP:12252"/>
        <dbReference type="ChEBI" id="CHEBI:15378"/>
        <dbReference type="ChEBI" id="CHEBI:30013"/>
        <dbReference type="ChEBI" id="CHEBI:57705"/>
        <dbReference type="ChEBI" id="CHEBI:58223"/>
        <dbReference type="ChEBI" id="CHEBI:90840"/>
        <dbReference type="EC" id="2.4.1.255"/>
    </reaction>
</comment>
<comment type="activity regulation">
    <text evidence="6">Inhibited by UDP, UTP and UDP-GlcNAc; 50 mM NaCl or KCl inhibit activity about 70%.</text>
</comment>
<comment type="biophysicochemical properties">
    <phDependence>
        <text evidence="6">Optimum pH is 6.0.</text>
    </phDependence>
</comment>
<comment type="pathway">
    <text evidence="9">Protein modification; protein glycosylation.</text>
</comment>
<comment type="subunit">
    <text evidence="1 2 4 6 7 9">Monomer; may exist in different oligomerization states in cells (By similarity). Homotrimer, oligomerizes via TPR repeats 6 and 7 (By similarity). Trimerization is not necessary for activity in vitro, however it increases affinity for UDP-GlcNAc (PubMed:10542233). A heterotrimer consisting of two 110 kDa subunits and one highly related 78 kDa subunit is isolated from liver (PubMed:1533623). Component of a THAP1/THAP3-HCFC1-OGT complex (By similarity). Component of the NSL complex at least composed of MOF/KAT8, KANSL1, KANSL2, KANSL3, MCRS1, PHF20, OGT1/OGT, WDR5 and HCFC1 (By similarity). Found in a complex with KIF5B, RHOT1, RHOT2 and TRAK1 (PubMed:24995978). Found in a complex composed of at least SINHCAF, SIN3A, HDAC1, SAP30, RBBP4, OGT and TET1 (By similarity). Component of a complex composed of KMT2E/MLL5, OGT and USP7; the complex stabilizes KMT2E/MLL5, preventing KMT2E/MLL5 ubiquitination and proteasomal-mediated degradation (By similarity). Interacts (via TPRs 1-6) with SIN3A; the interaction mediates transcriptional repression in parallel with histone deacetylase (By similarity). Interacts (via TPR 5-6) with TET1, TET2 and TET3 (By similarity). Interacts (via TPR repeats 6 and 7) with ATXN10 (PubMed:16714295). Interacts with NSD2 (By similarity). Interacts with PROSER1; this interaction mediates TET2 O-GlcNAcylation and stability by promoting the interaction between OGT and TET2 (By similarity).</text>
</comment>
<comment type="interaction">
    <interactant intactId="EBI-7614183">
        <id>P56558</id>
    </interactant>
    <interactant intactId="EBI-4567305">
        <id>Q9WVH3</id>
        <label>Foxo4</label>
    </interactant>
    <organismsDiffer>true</organismsDiffer>
    <experiments>2</experiments>
</comment>
<comment type="interaction">
    <interactant intactId="EBI-7614183">
        <id>P56558</id>
    </interactant>
    <interactant intactId="EBI-11291138">
        <id>Q9WU00</id>
        <label>Nrf1</label>
    </interactant>
    <organismsDiffer>true</organismsDiffer>
    <experiments>2</experiments>
</comment>
<comment type="interaction">
    <interactant intactId="EBI-7614183">
        <id>P56558</id>
    </interactant>
    <interactant intactId="EBI-1105048">
        <id>Q9UPV9</id>
        <label>TRAK1</label>
    </interactant>
    <organismsDiffer>true</organismsDiffer>
    <experiments>6</experiments>
</comment>
<comment type="subcellular location">
    <subcellularLocation>
        <location evidence="6 7 9 10">Cytoplasm</location>
    </subcellularLocation>
    <subcellularLocation>
        <location evidence="8 9 10">Nucleus</location>
    </subcellularLocation>
    <subcellularLocation>
        <location evidence="8">Cell membrane</location>
    </subcellularLocation>
    <subcellularLocation>
        <location evidence="9">Mitochondrion membrane</location>
    </subcellularLocation>
    <subcellularLocation>
        <location evidence="9">Cell projection</location>
    </subcellularLocation>
    <text evidence="1 8 9 12">Mostly in the nucleus (PubMed:9083067). After insulin induction, translocated from the nucleus to the cell membrane via phosphatidylinositide binding. Colocalizes with AKT1 at the plasma membrane (PubMed:18288188). TRAK1 recruits this protein to mitochondria (PubMed:24995978). In the absence of TRAK1, localizes in cytosol and nucleus (PubMed:24995978). Translocates into the nucleus via association with importin KPNA1 (By similarity).</text>
</comment>
<comment type="tissue specificity">
    <text evidence="5 7 10">Expressed in brain, heart, liver, thymus, muscle, lung, spleen, uterus and ovary; in the kidney only an immunologically-related 78 kDa band is present, which is also present in liver and muscle (PubMed:9083067). In the pancreas, expressed in both exocrine acinar cells and in endocrine cells of the islets of Langerhans.</text>
</comment>
<comment type="domain">
    <text evidence="1 9">The TPR repeat domain is required for substrate binding and oligomerization.</text>
</comment>
<comment type="PTM">
    <text evidence="10">Several different immunologically-related forms of this protein are found in different tissues (with apparent molecular weights of 110, 80 and 78 kDa); they are probably the result of alternative splicing and/or proteolysis.</text>
</comment>
<comment type="PTM">
    <text evidence="10">O-glycosylated; contains O-GlcNAc. Both p110 and p78 forms are O-glycosylated.</text>
</comment>
<comment type="PTM">
    <text evidence="1">Ubiquitinated by the SCF(FBXO31) complex, leading to its proteasomal degradation.</text>
</comment>
<comment type="PTM">
    <text evidence="1 2">Phosphorylation on Ser-3 or Ser-4 by GSK3-beta positively regulates its activity (By similarity). Phosphorylation at Thr-444 by AMPK promotes nuclear localization (By similarity).</text>
</comment>
<comment type="PTM">
    <text evidence="1">Glycosylated via autocatalysis; O-GlcNAcylation at Ser-389 promotes nuclear localization.</text>
</comment>
<comment type="similarity">
    <text evidence="11">Belongs to the glycosyltransferase 41 family. O-GlcNAc transferase subfamily.</text>
</comment>